<evidence type="ECO:0000269" key="1">
    <source>
    </source>
</evidence>
<evidence type="ECO:0000305" key="2"/>
<gene>
    <name type="primary">yisI</name>
    <name type="ordered locus">BSU10730</name>
</gene>
<dbReference type="EC" id="3.1.3.-"/>
<dbReference type="EMBL" id="Y09476">
    <property type="protein sequence ID" value="CAA70680.1"/>
    <property type="molecule type" value="Genomic_DNA"/>
</dbReference>
<dbReference type="EMBL" id="AL009126">
    <property type="protein sequence ID" value="CAB12913.1"/>
    <property type="molecule type" value="Genomic_DNA"/>
</dbReference>
<dbReference type="PIR" id="A69837">
    <property type="entry name" value="A69837"/>
</dbReference>
<dbReference type="RefSeq" id="WP_003233086.1">
    <property type="nucleotide sequence ID" value="NZ_OZ025638.1"/>
</dbReference>
<dbReference type="SMR" id="O06722"/>
<dbReference type="FunCoup" id="O06722">
    <property type="interactions" value="40"/>
</dbReference>
<dbReference type="STRING" id="224308.BSU10730"/>
<dbReference type="PaxDb" id="224308-BSU10730"/>
<dbReference type="EnsemblBacteria" id="CAB12913">
    <property type="protein sequence ID" value="CAB12913"/>
    <property type="gene ID" value="BSU_10730"/>
</dbReference>
<dbReference type="GeneID" id="936347"/>
<dbReference type="KEGG" id="bsu:BSU10730"/>
<dbReference type="PATRIC" id="fig|224308.179.peg.1154"/>
<dbReference type="eggNOG" id="ENOG50304QH">
    <property type="taxonomic scope" value="Bacteria"/>
</dbReference>
<dbReference type="InParanoid" id="O06722"/>
<dbReference type="OrthoDB" id="2973153at2"/>
<dbReference type="BioCyc" id="BSUB:BSU10730-MONOMER"/>
<dbReference type="Proteomes" id="UP000001570">
    <property type="component" value="Chromosome"/>
</dbReference>
<dbReference type="GO" id="GO:0016787">
    <property type="term" value="F:hydrolase activity"/>
    <property type="evidence" value="ECO:0007669"/>
    <property type="project" value="UniProtKB-KW"/>
</dbReference>
<dbReference type="GO" id="GO:0046983">
    <property type="term" value="F:protein dimerization activity"/>
    <property type="evidence" value="ECO:0007669"/>
    <property type="project" value="InterPro"/>
</dbReference>
<dbReference type="GO" id="GO:0043937">
    <property type="term" value="P:regulation of sporulation"/>
    <property type="evidence" value="ECO:0007669"/>
    <property type="project" value="InterPro"/>
</dbReference>
<dbReference type="GO" id="GO:0030435">
    <property type="term" value="P:sporulation resulting in formation of a cellular spore"/>
    <property type="evidence" value="ECO:0007669"/>
    <property type="project" value="UniProtKB-KW"/>
</dbReference>
<dbReference type="Gene3D" id="4.10.280.10">
    <property type="entry name" value="Helix-loop-helix DNA-binding domain"/>
    <property type="match status" value="1"/>
</dbReference>
<dbReference type="InterPro" id="IPR036638">
    <property type="entry name" value="HLH_DNA-bd_sf"/>
</dbReference>
<dbReference type="InterPro" id="IPR018540">
    <property type="entry name" value="Spo0E-like"/>
</dbReference>
<dbReference type="InterPro" id="IPR053028">
    <property type="entry name" value="Spo0E-like_phosphatase"/>
</dbReference>
<dbReference type="InterPro" id="IPR037208">
    <property type="entry name" value="Spo0E-like_sf"/>
</dbReference>
<dbReference type="PANTHER" id="PTHR41263">
    <property type="entry name" value="ASPARTYL-PHOSPHATE PHOSPHATASE YISI"/>
    <property type="match status" value="1"/>
</dbReference>
<dbReference type="PANTHER" id="PTHR41263:SF1">
    <property type="entry name" value="ASPARTYL-PHOSPHATE PHOSPHATASE YISI"/>
    <property type="match status" value="1"/>
</dbReference>
<dbReference type="Pfam" id="PF09388">
    <property type="entry name" value="SpoOE-like"/>
    <property type="match status" value="1"/>
</dbReference>
<dbReference type="SUPFAM" id="SSF140500">
    <property type="entry name" value="BAS1536-like"/>
    <property type="match status" value="1"/>
</dbReference>
<keyword id="KW-0378">Hydrolase</keyword>
<keyword id="KW-1185">Reference proteome</keyword>
<keyword id="KW-0749">Sporulation</keyword>
<feature type="chain" id="PRO_0000049582" description="Aspartyl-phosphate phosphatase YisI">
    <location>
        <begin position="1"/>
        <end position="56"/>
    </location>
</feature>
<protein>
    <recommendedName>
        <fullName>Aspartyl-phosphate phosphatase YisI</fullName>
        <ecNumber>3.1.3.-</ecNumber>
    </recommendedName>
    <alternativeName>
        <fullName>Stage 0 sporulation regulatory protein YisI</fullName>
    </alternativeName>
</protein>
<name>YISI_BACSU</name>
<organism>
    <name type="scientific">Bacillus subtilis (strain 168)</name>
    <dbReference type="NCBI Taxonomy" id="224308"/>
    <lineage>
        <taxon>Bacteria</taxon>
        <taxon>Bacillati</taxon>
        <taxon>Bacillota</taxon>
        <taxon>Bacilli</taxon>
        <taxon>Bacillales</taxon>
        <taxon>Bacillaceae</taxon>
        <taxon>Bacillus</taxon>
    </lineage>
</organism>
<proteinExistence type="evidence at transcript level"/>
<reference key="1">
    <citation type="journal article" date="1997" name="Microbiology">
        <title>Sequencing of regions downstream of addA (98 degrees) and citG (289 degrees) in Bacillus subtilis.</title>
        <authorList>
            <person name="Medina N."/>
            <person name="Vannier F."/>
            <person name="Roche B."/>
            <person name="Autret S."/>
            <person name="Levine A."/>
            <person name="Seror S.J."/>
        </authorList>
    </citation>
    <scope>NUCLEOTIDE SEQUENCE [GENOMIC DNA]</scope>
    <source>
        <strain>168</strain>
    </source>
</reference>
<reference key="2">
    <citation type="journal article" date="1997" name="Nature">
        <title>The complete genome sequence of the Gram-positive bacterium Bacillus subtilis.</title>
        <authorList>
            <person name="Kunst F."/>
            <person name="Ogasawara N."/>
            <person name="Moszer I."/>
            <person name="Albertini A.M."/>
            <person name="Alloni G."/>
            <person name="Azevedo V."/>
            <person name="Bertero M.G."/>
            <person name="Bessieres P."/>
            <person name="Bolotin A."/>
            <person name="Borchert S."/>
            <person name="Borriss R."/>
            <person name="Boursier L."/>
            <person name="Brans A."/>
            <person name="Braun M."/>
            <person name="Brignell S.C."/>
            <person name="Bron S."/>
            <person name="Brouillet S."/>
            <person name="Bruschi C.V."/>
            <person name="Caldwell B."/>
            <person name="Capuano V."/>
            <person name="Carter N.M."/>
            <person name="Choi S.-K."/>
            <person name="Codani J.-J."/>
            <person name="Connerton I.F."/>
            <person name="Cummings N.J."/>
            <person name="Daniel R.A."/>
            <person name="Denizot F."/>
            <person name="Devine K.M."/>
            <person name="Duesterhoeft A."/>
            <person name="Ehrlich S.D."/>
            <person name="Emmerson P.T."/>
            <person name="Entian K.-D."/>
            <person name="Errington J."/>
            <person name="Fabret C."/>
            <person name="Ferrari E."/>
            <person name="Foulger D."/>
            <person name="Fritz C."/>
            <person name="Fujita M."/>
            <person name="Fujita Y."/>
            <person name="Fuma S."/>
            <person name="Galizzi A."/>
            <person name="Galleron N."/>
            <person name="Ghim S.-Y."/>
            <person name="Glaser P."/>
            <person name="Goffeau A."/>
            <person name="Golightly E.J."/>
            <person name="Grandi G."/>
            <person name="Guiseppi G."/>
            <person name="Guy B.J."/>
            <person name="Haga K."/>
            <person name="Haiech J."/>
            <person name="Harwood C.R."/>
            <person name="Henaut A."/>
            <person name="Hilbert H."/>
            <person name="Holsappel S."/>
            <person name="Hosono S."/>
            <person name="Hullo M.-F."/>
            <person name="Itaya M."/>
            <person name="Jones L.-M."/>
            <person name="Joris B."/>
            <person name="Karamata D."/>
            <person name="Kasahara Y."/>
            <person name="Klaerr-Blanchard M."/>
            <person name="Klein C."/>
            <person name="Kobayashi Y."/>
            <person name="Koetter P."/>
            <person name="Koningstein G."/>
            <person name="Krogh S."/>
            <person name="Kumano M."/>
            <person name="Kurita K."/>
            <person name="Lapidus A."/>
            <person name="Lardinois S."/>
            <person name="Lauber J."/>
            <person name="Lazarevic V."/>
            <person name="Lee S.-M."/>
            <person name="Levine A."/>
            <person name="Liu H."/>
            <person name="Masuda S."/>
            <person name="Mauel C."/>
            <person name="Medigue C."/>
            <person name="Medina N."/>
            <person name="Mellado R.P."/>
            <person name="Mizuno M."/>
            <person name="Moestl D."/>
            <person name="Nakai S."/>
            <person name="Noback M."/>
            <person name="Noone D."/>
            <person name="O'Reilly M."/>
            <person name="Ogawa K."/>
            <person name="Ogiwara A."/>
            <person name="Oudega B."/>
            <person name="Park S.-H."/>
            <person name="Parro V."/>
            <person name="Pohl T.M."/>
            <person name="Portetelle D."/>
            <person name="Porwollik S."/>
            <person name="Prescott A.M."/>
            <person name="Presecan E."/>
            <person name="Pujic P."/>
            <person name="Purnelle B."/>
            <person name="Rapoport G."/>
            <person name="Rey M."/>
            <person name="Reynolds S."/>
            <person name="Rieger M."/>
            <person name="Rivolta C."/>
            <person name="Rocha E."/>
            <person name="Roche B."/>
            <person name="Rose M."/>
            <person name="Sadaie Y."/>
            <person name="Sato T."/>
            <person name="Scanlan E."/>
            <person name="Schleich S."/>
            <person name="Schroeter R."/>
            <person name="Scoffone F."/>
            <person name="Sekiguchi J."/>
            <person name="Sekowska A."/>
            <person name="Seror S.J."/>
            <person name="Serror P."/>
            <person name="Shin B.-S."/>
            <person name="Soldo B."/>
            <person name="Sorokin A."/>
            <person name="Tacconi E."/>
            <person name="Takagi T."/>
            <person name="Takahashi H."/>
            <person name="Takemaru K."/>
            <person name="Takeuchi M."/>
            <person name="Tamakoshi A."/>
            <person name="Tanaka T."/>
            <person name="Terpstra P."/>
            <person name="Tognoni A."/>
            <person name="Tosato V."/>
            <person name="Uchiyama S."/>
            <person name="Vandenbol M."/>
            <person name="Vannier F."/>
            <person name="Vassarotti A."/>
            <person name="Viari A."/>
            <person name="Wambutt R."/>
            <person name="Wedler E."/>
            <person name="Wedler H."/>
            <person name="Weitzenegger T."/>
            <person name="Winters P."/>
            <person name="Wipat A."/>
            <person name="Yamamoto H."/>
            <person name="Yamane K."/>
            <person name="Yasumoto K."/>
            <person name="Yata K."/>
            <person name="Yoshida K."/>
            <person name="Yoshikawa H.-F."/>
            <person name="Zumstein E."/>
            <person name="Yoshikawa H."/>
            <person name="Danchin A."/>
        </authorList>
    </citation>
    <scope>NUCLEOTIDE SEQUENCE [LARGE SCALE GENOMIC DNA]</scope>
    <source>
        <strain>168</strain>
    </source>
</reference>
<reference key="3">
    <citation type="journal article" date="2001" name="Mol. Microbiol.">
        <title>A new family of aspartyl phosphate phosphatases targeting the sporulation transcription factor Spo0A of Bacillus subtilis.</title>
        <authorList>
            <person name="Perego M."/>
        </authorList>
    </citation>
    <scope>FUNCTION</scope>
    <scope>INDUCTION</scope>
</reference>
<sequence>MNSKIEEMRITLIETAQKYGMNSKETIQCSQELDILLNTRIKEEMIFGRYLENSRM</sequence>
<comment type="function">
    <text evidence="1">Aspartyl-phosphate phosphatase which specifically dephosphorylates the sporulation transcription factor Spo0A-P and negatively regulates the sporulation initiation pathway in order to control the proper timing of sporulation.</text>
</comment>
<comment type="induction">
    <text evidence="1">During exponential phase and in conditions antithetical to sporulation.</text>
</comment>
<comment type="similarity">
    <text evidence="2">Belongs to the spo0E family.</text>
</comment>
<accession>O06722</accession>